<gene>
    <name evidence="3" type="primary">dctQ</name>
    <name evidence="6" type="ordered locus">VC_1928</name>
</gene>
<protein>
    <recommendedName>
        <fullName evidence="4">C4-dicarboxylate TRAP transporter small permease protein DctQ</fullName>
    </recommendedName>
</protein>
<feature type="chain" id="PRO_0000435383" description="C4-dicarboxylate TRAP transporter small permease protein DctQ">
    <location>
        <begin position="1"/>
        <end position="232"/>
    </location>
</feature>
<feature type="transmembrane region" description="Helical" evidence="2">
    <location>
        <begin position="30"/>
        <end position="50"/>
    </location>
</feature>
<feature type="transmembrane region" description="Helical" evidence="2">
    <location>
        <begin position="58"/>
        <end position="78"/>
    </location>
</feature>
<feature type="transmembrane region" description="Helical" evidence="2">
    <location>
        <begin position="103"/>
        <end position="123"/>
    </location>
</feature>
<feature type="transmembrane region" description="Helical" evidence="2">
    <location>
        <begin position="167"/>
        <end position="187"/>
    </location>
</feature>
<organism>
    <name type="scientific">Vibrio cholerae serotype O1 (strain ATCC 39315 / El Tor Inaba N16961)</name>
    <dbReference type="NCBI Taxonomy" id="243277"/>
    <lineage>
        <taxon>Bacteria</taxon>
        <taxon>Pseudomonadati</taxon>
        <taxon>Pseudomonadota</taxon>
        <taxon>Gammaproteobacteria</taxon>
        <taxon>Vibrionales</taxon>
        <taxon>Vibrionaceae</taxon>
        <taxon>Vibrio</taxon>
    </lineage>
</organism>
<evidence type="ECO:0000250" key="1">
    <source>
        <dbReference type="UniProtKB" id="O07837"/>
    </source>
</evidence>
<evidence type="ECO:0000255" key="2"/>
<evidence type="ECO:0000303" key="3">
    <source>
    </source>
</evidence>
<evidence type="ECO:0000305" key="4"/>
<evidence type="ECO:0000305" key="5">
    <source>
    </source>
</evidence>
<evidence type="ECO:0000312" key="6">
    <source>
        <dbReference type="EMBL" id="AAF95076.1"/>
    </source>
</evidence>
<proteinExistence type="inferred from homology"/>
<keyword id="KW-0997">Cell inner membrane</keyword>
<keyword id="KW-1003">Cell membrane</keyword>
<keyword id="KW-0472">Membrane</keyword>
<keyword id="KW-1185">Reference proteome</keyword>
<keyword id="KW-0812">Transmembrane</keyword>
<keyword id="KW-1133">Transmembrane helix</keyword>
<keyword id="KW-0813">Transport</keyword>
<comment type="function">
    <text evidence="5">Part of the tripartite ATP-independent periplasmic (TRAP) transport system DctPQM involved in C4-dicarboxylates uptake.</text>
</comment>
<comment type="subunit">
    <text evidence="1">The complex comprises the extracytoplasmic solute receptor protein DctP, and the two transmembrane proteins DctQ and DctM.</text>
</comment>
<comment type="subcellular location">
    <subcellularLocation>
        <location evidence="1">Cell inner membrane</location>
        <topology evidence="2">Multi-pass membrane protein</topology>
    </subcellularLocation>
</comment>
<comment type="similarity">
    <text evidence="4">Belongs to the TRAP transporter small permease family.</text>
</comment>
<dbReference type="EMBL" id="AE003852">
    <property type="protein sequence ID" value="AAF95076.1"/>
    <property type="molecule type" value="Genomic_DNA"/>
</dbReference>
<dbReference type="PIR" id="E82140">
    <property type="entry name" value="E82140"/>
</dbReference>
<dbReference type="RefSeq" id="NP_231562.1">
    <property type="nucleotide sequence ID" value="NC_002505.1"/>
</dbReference>
<dbReference type="STRING" id="243277.VC_1928"/>
<dbReference type="DNASU" id="2613557"/>
<dbReference type="EnsemblBacteria" id="AAF95076">
    <property type="protein sequence ID" value="AAF95076"/>
    <property type="gene ID" value="VC_1928"/>
</dbReference>
<dbReference type="KEGG" id="vch:VC_1928"/>
<dbReference type="PATRIC" id="fig|243277.26.peg.1845"/>
<dbReference type="eggNOG" id="COG3090">
    <property type="taxonomic scope" value="Bacteria"/>
</dbReference>
<dbReference type="HOGENOM" id="CLU_086356_3_2_6"/>
<dbReference type="Proteomes" id="UP000000584">
    <property type="component" value="Chromosome 1"/>
</dbReference>
<dbReference type="GO" id="GO:0005886">
    <property type="term" value="C:plasma membrane"/>
    <property type="evidence" value="ECO:0000318"/>
    <property type="project" value="GO_Central"/>
</dbReference>
<dbReference type="GO" id="GO:0022857">
    <property type="term" value="F:transmembrane transporter activity"/>
    <property type="evidence" value="ECO:0000318"/>
    <property type="project" value="GO_Central"/>
</dbReference>
<dbReference type="GO" id="GO:0015740">
    <property type="term" value="P:C4-dicarboxylate transport"/>
    <property type="evidence" value="ECO:0000318"/>
    <property type="project" value="GO_Central"/>
</dbReference>
<dbReference type="InterPro" id="IPR055348">
    <property type="entry name" value="DctQ"/>
</dbReference>
<dbReference type="InterPro" id="IPR007387">
    <property type="entry name" value="TRAP_DctQ"/>
</dbReference>
<dbReference type="PANTHER" id="PTHR35011">
    <property type="entry name" value="2,3-DIKETO-L-GULONATE TRAP TRANSPORTER SMALL PERMEASE PROTEIN YIAM"/>
    <property type="match status" value="1"/>
</dbReference>
<dbReference type="PANTHER" id="PTHR35011:SF2">
    <property type="entry name" value="2,3-DIKETO-L-GULONATE TRAP TRANSPORTER SMALL PERMEASE PROTEIN YIAM"/>
    <property type="match status" value="1"/>
</dbReference>
<dbReference type="Pfam" id="PF04290">
    <property type="entry name" value="DctQ"/>
    <property type="match status" value="1"/>
</dbReference>
<reference key="1">
    <citation type="journal article" date="2000" name="Nature">
        <title>DNA sequence of both chromosomes of the cholera pathogen Vibrio cholerae.</title>
        <authorList>
            <person name="Heidelberg J.F."/>
            <person name="Eisen J.A."/>
            <person name="Nelson W.C."/>
            <person name="Clayton R.A."/>
            <person name="Gwinn M.L."/>
            <person name="Dodson R.J."/>
            <person name="Haft D.H."/>
            <person name="Hickey E.K."/>
            <person name="Peterson J.D."/>
            <person name="Umayam L.A."/>
            <person name="Gill S.R."/>
            <person name="Nelson K.E."/>
            <person name="Read T.D."/>
            <person name="Tettelin H."/>
            <person name="Richardson D.L."/>
            <person name="Ermolaeva M.D."/>
            <person name="Vamathevan J.J."/>
            <person name="Bass S."/>
            <person name="Qin H."/>
            <person name="Dragoi I."/>
            <person name="Sellers P."/>
            <person name="McDonald L.A."/>
            <person name="Utterback T.R."/>
            <person name="Fleischmann R.D."/>
            <person name="Nierman W.C."/>
            <person name="White O."/>
            <person name="Salzberg S.L."/>
            <person name="Smith H.O."/>
            <person name="Colwell R.R."/>
            <person name="Mekalanos J.J."/>
            <person name="Venter J.C."/>
            <person name="Fraser C.M."/>
        </authorList>
    </citation>
    <scope>NUCLEOTIDE SEQUENCE [LARGE SCALE GENOMIC DNA]</scope>
    <source>
        <strain>ATCC 39315 / El Tor Inaba N16961</strain>
    </source>
</reference>
<reference key="2">
    <citation type="journal article" date="2012" name="Microbiology">
        <title>The VC1777-VC1779 proteins are members of a sialic acid-specific subfamily of TRAP transporters (SiaPQM) and constitute the sole route of sialic acid uptake in the human pathogen Vibrio cholerae.</title>
        <authorList>
            <person name="Chowdhury N."/>
            <person name="Norris J."/>
            <person name="McAlister E."/>
            <person name="Lau S.Y."/>
            <person name="Thomas G.H."/>
            <person name="Boyd E.F."/>
        </authorList>
    </citation>
    <scope>PROBABLE FUNCTION</scope>
</reference>
<accession>Q9KQS0</accession>
<sequence>MSVRHTIRAMYHMEQSWFSRVGQFTDSIEEFLIAFFMGAMTLLTFANVIMRYLFNDNILWALEGTVFMFAWMVLVGASFGVKRHFHIGVDVLINIAPARLRKLYALVAVACCLAFSILLLIGSWNYWHPFITERAWYETDDIPMPDMLQFLADWVNEGERYEKLPRFIPYAALPIGMALLTFRFLQIAWQIITGKLDRMIAGHEAEEDLEALKAELSEAGEAMMPKTQGKEK</sequence>
<name>DCTQ_VIBCH</name>